<accession>P57407</accession>
<comment type="subcellular location">
    <subcellularLocation>
        <location evidence="1">Cytoplasm</location>
    </subcellularLocation>
</comment>
<organism>
    <name type="scientific">Buchnera aphidicola subsp. Acyrthosiphon pisum (strain APS)</name>
    <name type="common">Acyrthosiphon pisum symbiotic bacterium</name>
    <dbReference type="NCBI Taxonomy" id="107806"/>
    <lineage>
        <taxon>Bacteria</taxon>
        <taxon>Pseudomonadati</taxon>
        <taxon>Pseudomonadota</taxon>
        <taxon>Gammaproteobacteria</taxon>
        <taxon>Enterobacterales</taxon>
        <taxon>Erwiniaceae</taxon>
        <taxon>Buchnera</taxon>
    </lineage>
</organism>
<gene>
    <name type="primary">cspC</name>
    <name type="ordered locus">BU322</name>
</gene>
<reference key="1">
    <citation type="journal article" date="2000" name="Nature">
        <title>Genome sequence of the endocellular bacterial symbiont of aphids Buchnera sp. APS.</title>
        <authorList>
            <person name="Shigenobu S."/>
            <person name="Watanabe H."/>
            <person name="Hattori M."/>
            <person name="Sakaki Y."/>
            <person name="Ishikawa H."/>
        </authorList>
    </citation>
    <scope>NUCLEOTIDE SEQUENCE [LARGE SCALE GENOMIC DNA]</scope>
    <source>
        <strain>APS</strain>
    </source>
</reference>
<dbReference type="EMBL" id="BA000003">
    <property type="protein sequence ID" value="BAB13030.1"/>
    <property type="molecule type" value="Genomic_DNA"/>
</dbReference>
<dbReference type="RefSeq" id="NP_240144.1">
    <property type="nucleotide sequence ID" value="NC_002528.1"/>
</dbReference>
<dbReference type="RefSeq" id="WP_009874276.1">
    <property type="nucleotide sequence ID" value="NZ_AP036055.1"/>
</dbReference>
<dbReference type="SMR" id="P57407"/>
<dbReference type="STRING" id="563178.BUAP5A_315"/>
<dbReference type="EnsemblBacteria" id="BAB13030">
    <property type="protein sequence ID" value="BAB13030"/>
    <property type="gene ID" value="BAB13030"/>
</dbReference>
<dbReference type="KEGG" id="buc:BU322"/>
<dbReference type="PATRIC" id="fig|107806.10.peg.334"/>
<dbReference type="eggNOG" id="COG1278">
    <property type="taxonomic scope" value="Bacteria"/>
</dbReference>
<dbReference type="HOGENOM" id="CLU_117621_2_1_6"/>
<dbReference type="Proteomes" id="UP000001806">
    <property type="component" value="Chromosome"/>
</dbReference>
<dbReference type="GO" id="GO:0005829">
    <property type="term" value="C:cytosol"/>
    <property type="evidence" value="ECO:0007669"/>
    <property type="project" value="UniProtKB-ARBA"/>
</dbReference>
<dbReference type="GO" id="GO:0003677">
    <property type="term" value="F:DNA binding"/>
    <property type="evidence" value="ECO:0007669"/>
    <property type="project" value="UniProtKB-KW"/>
</dbReference>
<dbReference type="CDD" id="cd04458">
    <property type="entry name" value="CSP_CDS"/>
    <property type="match status" value="1"/>
</dbReference>
<dbReference type="FunFam" id="2.40.50.140:FF:000006">
    <property type="entry name" value="Cold shock protein CspC"/>
    <property type="match status" value="1"/>
</dbReference>
<dbReference type="Gene3D" id="2.40.50.140">
    <property type="entry name" value="Nucleic acid-binding proteins"/>
    <property type="match status" value="1"/>
</dbReference>
<dbReference type="InterPro" id="IPR012156">
    <property type="entry name" value="Cold_shock_CspA"/>
</dbReference>
<dbReference type="InterPro" id="IPR050181">
    <property type="entry name" value="Cold_shock_domain"/>
</dbReference>
<dbReference type="InterPro" id="IPR011129">
    <property type="entry name" value="CSD"/>
</dbReference>
<dbReference type="InterPro" id="IPR019844">
    <property type="entry name" value="CSD_CS"/>
</dbReference>
<dbReference type="InterPro" id="IPR002059">
    <property type="entry name" value="CSP_DNA-bd"/>
</dbReference>
<dbReference type="InterPro" id="IPR012340">
    <property type="entry name" value="NA-bd_OB-fold"/>
</dbReference>
<dbReference type="NCBIfam" id="NF007062">
    <property type="entry name" value="PRK09507.1"/>
    <property type="match status" value="1"/>
</dbReference>
<dbReference type="NCBIfam" id="NF008190">
    <property type="entry name" value="PRK10943.1"/>
    <property type="match status" value="1"/>
</dbReference>
<dbReference type="PANTHER" id="PTHR11544">
    <property type="entry name" value="COLD SHOCK DOMAIN CONTAINING PROTEINS"/>
    <property type="match status" value="1"/>
</dbReference>
<dbReference type="Pfam" id="PF00313">
    <property type="entry name" value="CSD"/>
    <property type="match status" value="1"/>
</dbReference>
<dbReference type="PIRSF" id="PIRSF002599">
    <property type="entry name" value="Cold_shock_A"/>
    <property type="match status" value="1"/>
</dbReference>
<dbReference type="PRINTS" id="PR00050">
    <property type="entry name" value="COLDSHOCK"/>
</dbReference>
<dbReference type="SMART" id="SM00357">
    <property type="entry name" value="CSP"/>
    <property type="match status" value="1"/>
</dbReference>
<dbReference type="SUPFAM" id="SSF50249">
    <property type="entry name" value="Nucleic acid-binding proteins"/>
    <property type="match status" value="1"/>
</dbReference>
<dbReference type="PROSITE" id="PS00352">
    <property type="entry name" value="CSD_1"/>
    <property type="match status" value="1"/>
</dbReference>
<dbReference type="PROSITE" id="PS51857">
    <property type="entry name" value="CSD_2"/>
    <property type="match status" value="1"/>
</dbReference>
<keyword id="KW-0010">Activator</keyword>
<keyword id="KW-0963">Cytoplasm</keyword>
<keyword id="KW-0238">DNA-binding</keyword>
<keyword id="KW-1185">Reference proteome</keyword>
<keyword id="KW-0804">Transcription</keyword>
<keyword id="KW-0805">Transcription regulation</keyword>
<feature type="initiator methionine" description="Removed" evidence="1">
    <location>
        <position position="1"/>
    </location>
</feature>
<feature type="chain" id="PRO_0000100247" description="Cold shock-like protein CspC">
    <location>
        <begin position="2"/>
        <end position="69"/>
    </location>
</feature>
<feature type="domain" description="CSD">
    <location>
        <begin position="6"/>
        <end position="66"/>
    </location>
</feature>
<protein>
    <recommendedName>
        <fullName>Cold shock-like protein CspC</fullName>
        <shortName>CSP-C</shortName>
    </recommendedName>
</protein>
<name>CSPC_BUCAI</name>
<proteinExistence type="inferred from homology"/>
<sequence length="69" mass="7526">MAKIKGQVKWFNESKGFGFITPSDGSKDVFVHFSSIQGNGFKTLTEGQNVEFEIQDGQKGPAAVNVFSL</sequence>
<evidence type="ECO:0000250" key="1"/>